<sequence>MFSEIAPRYDLLNRLLSFGADLRWRRRAVDLALEKAPKRILDLATGTGDLALMLKERAPGAEVVGADFAPPMLAIARRKAEARGLEVRFLEADALALPFPDGAFDAVTIAFGFRNFADYEKALGELYRVLAPGGRLVVLEFPPPPKGAFGLVYRVYFQRVLPFLGGLISGNFGAYRYLPESVEAFPAPEALKAMMAAAGFSVRYELLTFGVAAIHVGDRP</sequence>
<feature type="chain" id="PRO_0000193344" description="Demethylmenaquinone methyltransferase">
    <location>
        <begin position="1"/>
        <end position="220"/>
    </location>
</feature>
<feature type="binding site" evidence="1">
    <location>
        <position position="47"/>
    </location>
    <ligand>
        <name>S-adenosyl-L-methionine</name>
        <dbReference type="ChEBI" id="CHEBI:59789"/>
    </ligand>
</feature>
<feature type="binding site" evidence="1">
    <location>
        <position position="67"/>
    </location>
    <ligand>
        <name>S-adenosyl-L-methionine</name>
        <dbReference type="ChEBI" id="CHEBI:59789"/>
    </ligand>
</feature>
<feature type="binding site" evidence="1">
    <location>
        <begin position="93"/>
        <end position="94"/>
    </location>
    <ligand>
        <name>S-adenosyl-L-methionine</name>
        <dbReference type="ChEBI" id="CHEBI:59789"/>
    </ligand>
</feature>
<protein>
    <recommendedName>
        <fullName evidence="1">Demethylmenaquinone methyltransferase</fullName>
        <ecNumber evidence="1">2.1.1.163</ecNumber>
    </recommendedName>
</protein>
<name>MENG_THET2</name>
<dbReference type="EC" id="2.1.1.163" evidence="1"/>
<dbReference type="EMBL" id="AE017221">
    <property type="protein sequence ID" value="AAS81845.1"/>
    <property type="molecule type" value="Genomic_DNA"/>
</dbReference>
<dbReference type="SMR" id="Q72HI4"/>
<dbReference type="KEGG" id="tth:TT_C1503"/>
<dbReference type="eggNOG" id="COG2226">
    <property type="taxonomic scope" value="Bacteria"/>
</dbReference>
<dbReference type="HOGENOM" id="CLU_037990_0_0_0"/>
<dbReference type="UniPathway" id="UPA00079">
    <property type="reaction ID" value="UER00169"/>
</dbReference>
<dbReference type="Proteomes" id="UP000000592">
    <property type="component" value="Chromosome"/>
</dbReference>
<dbReference type="GO" id="GO:0043770">
    <property type="term" value="F:demethylmenaquinone methyltransferase activity"/>
    <property type="evidence" value="ECO:0007669"/>
    <property type="project" value="UniProtKB-UniRule"/>
</dbReference>
<dbReference type="GO" id="GO:0009234">
    <property type="term" value="P:menaquinone biosynthetic process"/>
    <property type="evidence" value="ECO:0007669"/>
    <property type="project" value="UniProtKB-UniRule"/>
</dbReference>
<dbReference type="GO" id="GO:0032259">
    <property type="term" value="P:methylation"/>
    <property type="evidence" value="ECO:0007669"/>
    <property type="project" value="UniProtKB-KW"/>
</dbReference>
<dbReference type="CDD" id="cd02440">
    <property type="entry name" value="AdoMet_MTases"/>
    <property type="match status" value="1"/>
</dbReference>
<dbReference type="Gene3D" id="3.40.50.150">
    <property type="entry name" value="Vaccinia Virus protein VP39"/>
    <property type="match status" value="1"/>
</dbReference>
<dbReference type="HAMAP" id="MF_01813">
    <property type="entry name" value="MenG_UbiE_methyltr"/>
    <property type="match status" value="1"/>
</dbReference>
<dbReference type="InterPro" id="IPR029063">
    <property type="entry name" value="SAM-dependent_MTases_sf"/>
</dbReference>
<dbReference type="InterPro" id="IPR004033">
    <property type="entry name" value="UbiE/COQ5_MeTrFase"/>
</dbReference>
<dbReference type="InterPro" id="IPR023576">
    <property type="entry name" value="UbiE/COQ5_MeTrFase_CS"/>
</dbReference>
<dbReference type="NCBIfam" id="TIGR01934">
    <property type="entry name" value="MenG_MenH_UbiE"/>
    <property type="match status" value="1"/>
</dbReference>
<dbReference type="NCBIfam" id="NF001244">
    <property type="entry name" value="PRK00216.1-5"/>
    <property type="match status" value="1"/>
</dbReference>
<dbReference type="PANTHER" id="PTHR43591:SF24">
    <property type="entry name" value="2-METHOXY-6-POLYPRENYL-1,4-BENZOQUINOL METHYLASE, MITOCHONDRIAL"/>
    <property type="match status" value="1"/>
</dbReference>
<dbReference type="PANTHER" id="PTHR43591">
    <property type="entry name" value="METHYLTRANSFERASE"/>
    <property type="match status" value="1"/>
</dbReference>
<dbReference type="Pfam" id="PF01209">
    <property type="entry name" value="Ubie_methyltran"/>
    <property type="match status" value="1"/>
</dbReference>
<dbReference type="SUPFAM" id="SSF53335">
    <property type="entry name" value="S-adenosyl-L-methionine-dependent methyltransferases"/>
    <property type="match status" value="1"/>
</dbReference>
<dbReference type="PROSITE" id="PS51608">
    <property type="entry name" value="SAM_MT_UBIE"/>
    <property type="match status" value="1"/>
</dbReference>
<dbReference type="PROSITE" id="PS01183">
    <property type="entry name" value="UBIE_1"/>
    <property type="match status" value="1"/>
</dbReference>
<proteinExistence type="inferred from homology"/>
<organism>
    <name type="scientific">Thermus thermophilus (strain ATCC BAA-163 / DSM 7039 / HB27)</name>
    <dbReference type="NCBI Taxonomy" id="262724"/>
    <lineage>
        <taxon>Bacteria</taxon>
        <taxon>Thermotogati</taxon>
        <taxon>Deinococcota</taxon>
        <taxon>Deinococci</taxon>
        <taxon>Thermales</taxon>
        <taxon>Thermaceae</taxon>
        <taxon>Thermus</taxon>
    </lineage>
</organism>
<reference key="1">
    <citation type="journal article" date="2004" name="Nat. Biotechnol.">
        <title>The genome sequence of the extreme thermophile Thermus thermophilus.</title>
        <authorList>
            <person name="Henne A."/>
            <person name="Brueggemann H."/>
            <person name="Raasch C."/>
            <person name="Wiezer A."/>
            <person name="Hartsch T."/>
            <person name="Liesegang H."/>
            <person name="Johann A."/>
            <person name="Lienard T."/>
            <person name="Gohl O."/>
            <person name="Martinez-Arias R."/>
            <person name="Jacobi C."/>
            <person name="Starkuviene V."/>
            <person name="Schlenczeck S."/>
            <person name="Dencker S."/>
            <person name="Huber R."/>
            <person name="Klenk H.-P."/>
            <person name="Kramer W."/>
            <person name="Merkl R."/>
            <person name="Gottschalk G."/>
            <person name="Fritz H.-J."/>
        </authorList>
    </citation>
    <scope>NUCLEOTIDE SEQUENCE [LARGE SCALE GENOMIC DNA]</scope>
    <source>
        <strain>ATCC BAA-163 / DSM 7039 / HB27</strain>
    </source>
</reference>
<evidence type="ECO:0000255" key="1">
    <source>
        <dbReference type="HAMAP-Rule" id="MF_01813"/>
    </source>
</evidence>
<gene>
    <name evidence="1" type="primary">menG</name>
    <name type="ordered locus">TT_C1503</name>
</gene>
<keyword id="KW-0474">Menaquinone biosynthesis</keyword>
<keyword id="KW-0489">Methyltransferase</keyword>
<keyword id="KW-0949">S-adenosyl-L-methionine</keyword>
<keyword id="KW-0808">Transferase</keyword>
<comment type="function">
    <text evidence="1">Methyltransferase required for the conversion of demethylmenaquinol (DMKH2) to menaquinol (MKH2).</text>
</comment>
<comment type="catalytic activity">
    <reaction evidence="1">
        <text>a 2-demethylmenaquinol + S-adenosyl-L-methionine = a menaquinol + S-adenosyl-L-homocysteine + H(+)</text>
        <dbReference type="Rhea" id="RHEA:42640"/>
        <dbReference type="Rhea" id="RHEA-COMP:9539"/>
        <dbReference type="Rhea" id="RHEA-COMP:9563"/>
        <dbReference type="ChEBI" id="CHEBI:15378"/>
        <dbReference type="ChEBI" id="CHEBI:18151"/>
        <dbReference type="ChEBI" id="CHEBI:55437"/>
        <dbReference type="ChEBI" id="CHEBI:57856"/>
        <dbReference type="ChEBI" id="CHEBI:59789"/>
        <dbReference type="EC" id="2.1.1.163"/>
    </reaction>
</comment>
<comment type="pathway">
    <text evidence="1">Quinol/quinone metabolism; menaquinone biosynthesis; menaquinol from 1,4-dihydroxy-2-naphthoate: step 2/2.</text>
</comment>
<comment type="similarity">
    <text evidence="1">Belongs to the class I-like SAM-binding methyltransferase superfamily. MenG/UbiE family.</text>
</comment>
<accession>Q72HI4</accession>